<evidence type="ECO:0000255" key="1">
    <source>
        <dbReference type="HAMAP-Rule" id="MF_00175"/>
    </source>
</evidence>
<evidence type="ECO:0000255" key="2">
    <source>
        <dbReference type="PROSITE-ProRule" id="PRU01250"/>
    </source>
</evidence>
<protein>
    <recommendedName>
        <fullName evidence="1">ATP-dependent Clp protease ATP-binding subunit ClpX</fullName>
    </recommendedName>
</protein>
<dbReference type="EMBL" id="AP006841">
    <property type="protein sequence ID" value="BAD50819.1"/>
    <property type="molecule type" value="Genomic_DNA"/>
</dbReference>
<dbReference type="RefSeq" id="WP_005791864.1">
    <property type="nucleotide sequence ID" value="NZ_UYXF01000013.1"/>
</dbReference>
<dbReference type="RefSeq" id="YP_101353.1">
    <property type="nucleotide sequence ID" value="NC_006347.1"/>
</dbReference>
<dbReference type="SMR" id="Q64NW3"/>
<dbReference type="STRING" id="295405.BF4077"/>
<dbReference type="GeneID" id="60367605"/>
<dbReference type="KEGG" id="bfr:BF4077"/>
<dbReference type="PATRIC" id="fig|295405.11.peg.3925"/>
<dbReference type="HOGENOM" id="CLU_014218_8_2_10"/>
<dbReference type="OrthoDB" id="9804062at2"/>
<dbReference type="Proteomes" id="UP000002197">
    <property type="component" value="Chromosome"/>
</dbReference>
<dbReference type="GO" id="GO:0009376">
    <property type="term" value="C:HslUV protease complex"/>
    <property type="evidence" value="ECO:0007669"/>
    <property type="project" value="TreeGrafter"/>
</dbReference>
<dbReference type="GO" id="GO:0005524">
    <property type="term" value="F:ATP binding"/>
    <property type="evidence" value="ECO:0007669"/>
    <property type="project" value="UniProtKB-UniRule"/>
</dbReference>
<dbReference type="GO" id="GO:0016887">
    <property type="term" value="F:ATP hydrolysis activity"/>
    <property type="evidence" value="ECO:0007669"/>
    <property type="project" value="InterPro"/>
</dbReference>
<dbReference type="GO" id="GO:0140662">
    <property type="term" value="F:ATP-dependent protein folding chaperone"/>
    <property type="evidence" value="ECO:0007669"/>
    <property type="project" value="InterPro"/>
</dbReference>
<dbReference type="GO" id="GO:0046983">
    <property type="term" value="F:protein dimerization activity"/>
    <property type="evidence" value="ECO:0007669"/>
    <property type="project" value="InterPro"/>
</dbReference>
<dbReference type="GO" id="GO:0051082">
    <property type="term" value="F:unfolded protein binding"/>
    <property type="evidence" value="ECO:0007669"/>
    <property type="project" value="UniProtKB-UniRule"/>
</dbReference>
<dbReference type="GO" id="GO:0008270">
    <property type="term" value="F:zinc ion binding"/>
    <property type="evidence" value="ECO:0007669"/>
    <property type="project" value="InterPro"/>
</dbReference>
<dbReference type="GO" id="GO:0051301">
    <property type="term" value="P:cell division"/>
    <property type="evidence" value="ECO:0007669"/>
    <property type="project" value="TreeGrafter"/>
</dbReference>
<dbReference type="GO" id="GO:0051603">
    <property type="term" value="P:proteolysis involved in protein catabolic process"/>
    <property type="evidence" value="ECO:0007669"/>
    <property type="project" value="TreeGrafter"/>
</dbReference>
<dbReference type="CDD" id="cd19497">
    <property type="entry name" value="RecA-like_ClpX"/>
    <property type="match status" value="1"/>
</dbReference>
<dbReference type="FunFam" id="1.10.8.60:FF:000002">
    <property type="entry name" value="ATP-dependent Clp protease ATP-binding subunit ClpX"/>
    <property type="match status" value="1"/>
</dbReference>
<dbReference type="FunFam" id="3.40.50.300:FF:000005">
    <property type="entry name" value="ATP-dependent Clp protease ATP-binding subunit ClpX"/>
    <property type="match status" value="1"/>
</dbReference>
<dbReference type="Gene3D" id="1.10.8.60">
    <property type="match status" value="1"/>
</dbReference>
<dbReference type="Gene3D" id="6.20.220.10">
    <property type="entry name" value="ClpX chaperone, C4-type zinc finger domain"/>
    <property type="match status" value="1"/>
</dbReference>
<dbReference type="Gene3D" id="3.40.50.300">
    <property type="entry name" value="P-loop containing nucleotide triphosphate hydrolases"/>
    <property type="match status" value="1"/>
</dbReference>
<dbReference type="HAMAP" id="MF_00175">
    <property type="entry name" value="ClpX"/>
    <property type="match status" value="1"/>
</dbReference>
<dbReference type="InterPro" id="IPR003593">
    <property type="entry name" value="AAA+_ATPase"/>
</dbReference>
<dbReference type="InterPro" id="IPR050052">
    <property type="entry name" value="ATP-dep_Clp_protease_ClpX"/>
</dbReference>
<dbReference type="InterPro" id="IPR003959">
    <property type="entry name" value="ATPase_AAA_core"/>
</dbReference>
<dbReference type="InterPro" id="IPR019489">
    <property type="entry name" value="Clp_ATPase_C"/>
</dbReference>
<dbReference type="InterPro" id="IPR004487">
    <property type="entry name" value="Clp_protease_ATP-bd_su_ClpX"/>
</dbReference>
<dbReference type="InterPro" id="IPR046425">
    <property type="entry name" value="ClpX_bact"/>
</dbReference>
<dbReference type="InterPro" id="IPR027417">
    <property type="entry name" value="P-loop_NTPase"/>
</dbReference>
<dbReference type="InterPro" id="IPR010603">
    <property type="entry name" value="Znf_CppX_C4"/>
</dbReference>
<dbReference type="InterPro" id="IPR038366">
    <property type="entry name" value="Znf_CppX_C4_sf"/>
</dbReference>
<dbReference type="NCBIfam" id="TIGR00382">
    <property type="entry name" value="clpX"/>
    <property type="match status" value="1"/>
</dbReference>
<dbReference type="NCBIfam" id="NF003745">
    <property type="entry name" value="PRK05342.1"/>
    <property type="match status" value="1"/>
</dbReference>
<dbReference type="PANTHER" id="PTHR48102:SF7">
    <property type="entry name" value="ATP-DEPENDENT CLP PROTEASE ATP-BINDING SUBUNIT CLPX-LIKE, MITOCHONDRIAL"/>
    <property type="match status" value="1"/>
</dbReference>
<dbReference type="PANTHER" id="PTHR48102">
    <property type="entry name" value="ATP-DEPENDENT CLP PROTEASE ATP-BINDING SUBUNIT CLPX-LIKE, MITOCHONDRIAL-RELATED"/>
    <property type="match status" value="1"/>
</dbReference>
<dbReference type="Pfam" id="PF07724">
    <property type="entry name" value="AAA_2"/>
    <property type="match status" value="1"/>
</dbReference>
<dbReference type="Pfam" id="PF10431">
    <property type="entry name" value="ClpB_D2-small"/>
    <property type="match status" value="1"/>
</dbReference>
<dbReference type="Pfam" id="PF06689">
    <property type="entry name" value="zf-C4_ClpX"/>
    <property type="match status" value="1"/>
</dbReference>
<dbReference type="SMART" id="SM00382">
    <property type="entry name" value="AAA"/>
    <property type="match status" value="1"/>
</dbReference>
<dbReference type="SMART" id="SM01086">
    <property type="entry name" value="ClpB_D2-small"/>
    <property type="match status" value="1"/>
</dbReference>
<dbReference type="SMART" id="SM00994">
    <property type="entry name" value="zf-C4_ClpX"/>
    <property type="match status" value="1"/>
</dbReference>
<dbReference type="SUPFAM" id="SSF57716">
    <property type="entry name" value="Glucocorticoid receptor-like (DNA-binding domain)"/>
    <property type="match status" value="1"/>
</dbReference>
<dbReference type="SUPFAM" id="SSF52540">
    <property type="entry name" value="P-loop containing nucleoside triphosphate hydrolases"/>
    <property type="match status" value="1"/>
</dbReference>
<dbReference type="PROSITE" id="PS51902">
    <property type="entry name" value="CLPX_ZB"/>
    <property type="match status" value="1"/>
</dbReference>
<comment type="function">
    <text evidence="1">ATP-dependent specificity component of the Clp protease. It directs the protease to specific substrates. Can perform chaperone functions in the absence of ClpP.</text>
</comment>
<comment type="subunit">
    <text evidence="1">Component of the ClpX-ClpP complex. Forms a hexameric ring that, in the presence of ATP, binds to fourteen ClpP subunits assembled into a disk-like structure with a central cavity, resembling the structure of eukaryotic proteasomes.</text>
</comment>
<comment type="similarity">
    <text evidence="1">Belongs to the ClpX chaperone family.</text>
</comment>
<organism>
    <name type="scientific">Bacteroides fragilis (strain YCH46)</name>
    <dbReference type="NCBI Taxonomy" id="295405"/>
    <lineage>
        <taxon>Bacteria</taxon>
        <taxon>Pseudomonadati</taxon>
        <taxon>Bacteroidota</taxon>
        <taxon>Bacteroidia</taxon>
        <taxon>Bacteroidales</taxon>
        <taxon>Bacteroidaceae</taxon>
        <taxon>Bacteroides</taxon>
    </lineage>
</organism>
<proteinExistence type="inferred from homology"/>
<accession>Q64NW3</accession>
<keyword id="KW-0067">ATP-binding</keyword>
<keyword id="KW-0143">Chaperone</keyword>
<keyword id="KW-0479">Metal-binding</keyword>
<keyword id="KW-0547">Nucleotide-binding</keyword>
<keyword id="KW-0862">Zinc</keyword>
<name>CLPX_BACFR</name>
<gene>
    <name evidence="1" type="primary">clpX</name>
    <name type="ordered locus">BF4077</name>
</gene>
<feature type="chain" id="PRO_0000160309" description="ATP-dependent Clp protease ATP-binding subunit ClpX">
    <location>
        <begin position="1"/>
        <end position="415"/>
    </location>
</feature>
<feature type="domain" description="ClpX-type ZB" evidence="2">
    <location>
        <begin position="1"/>
        <end position="52"/>
    </location>
</feature>
<feature type="binding site" evidence="2">
    <location>
        <position position="11"/>
    </location>
    <ligand>
        <name>Zn(2+)</name>
        <dbReference type="ChEBI" id="CHEBI:29105"/>
    </ligand>
</feature>
<feature type="binding site" evidence="2">
    <location>
        <position position="14"/>
    </location>
    <ligand>
        <name>Zn(2+)</name>
        <dbReference type="ChEBI" id="CHEBI:29105"/>
    </ligand>
</feature>
<feature type="binding site" evidence="2">
    <location>
        <position position="33"/>
    </location>
    <ligand>
        <name>Zn(2+)</name>
        <dbReference type="ChEBI" id="CHEBI:29105"/>
    </ligand>
</feature>
<feature type="binding site" evidence="2">
    <location>
        <position position="36"/>
    </location>
    <ligand>
        <name>Zn(2+)</name>
        <dbReference type="ChEBI" id="CHEBI:29105"/>
    </ligand>
</feature>
<feature type="binding site" evidence="1">
    <location>
        <begin position="121"/>
        <end position="128"/>
    </location>
    <ligand>
        <name>ATP</name>
        <dbReference type="ChEBI" id="CHEBI:30616"/>
    </ligand>
</feature>
<reference key="1">
    <citation type="journal article" date="2004" name="Proc. Natl. Acad. Sci. U.S.A.">
        <title>Genomic analysis of Bacteroides fragilis reveals extensive DNA inversions regulating cell surface adaptation.</title>
        <authorList>
            <person name="Kuwahara T."/>
            <person name="Yamashita A."/>
            <person name="Hirakawa H."/>
            <person name="Nakayama H."/>
            <person name="Toh H."/>
            <person name="Okada N."/>
            <person name="Kuhara S."/>
            <person name="Hattori M."/>
            <person name="Hayashi T."/>
            <person name="Ohnishi Y."/>
        </authorList>
    </citation>
    <scope>NUCLEOTIDE SEQUENCE [LARGE SCALE GENOMIC DNA]</scope>
    <source>
        <strain>YCH46</strain>
    </source>
</reference>
<sequence>MAESKNNKKRCSFCGRSENEVGFLITGMNGYICDSCATQAYEITQEAMGAGKQSAGATRLNLKELPKPVEIKNFLDQYVIGQDDAKRFLAVSVYNHYKRLLQKDSGDDVEIEKSNIIMVGSTGTGKTLLARTIAKLLHVPFTIVDATVLTEAGYVGEDIESILTRLLQVADYNVPEAEQGIVFIDEIDKIARKGDNPSITRDVSGEGVQQGLLKLLEGSVVNVPPQGGRKHPDQKMIPVNTKNILFICGGAFDGIEKKIAQRLNTHVVGYNASRKTATIDKNNMMQYIAPQDLKSFGLIPEIIGRLPVLTYLNPLDRNALRAILTEPKNSIIKQYIKLFEMDGVKLTFQPEVYEYIVDKAVEYKLGARGLRSIVETIMMDVMFEIPSEDQKEYEVTLDYAKHQLEKANLARLQTA</sequence>